<dbReference type="EMBL" id="BC081066">
    <property type="protein sequence ID" value="AAH81066.1"/>
    <property type="molecule type" value="mRNA"/>
</dbReference>
<dbReference type="RefSeq" id="NP_001087671.1">
    <property type="nucleotide sequence ID" value="NM_001094202.1"/>
</dbReference>
<dbReference type="SMR" id="Q66J44"/>
<dbReference type="DNASU" id="447495"/>
<dbReference type="GeneID" id="447495"/>
<dbReference type="KEGG" id="xla:447495"/>
<dbReference type="AGR" id="Xenbase:XB-GENE-6253859"/>
<dbReference type="CTD" id="447495"/>
<dbReference type="Xenbase" id="XB-GENE-6253859">
    <property type="gene designation" value="sptssa.S"/>
</dbReference>
<dbReference type="OrthoDB" id="202672at2759"/>
<dbReference type="UniPathway" id="UPA00222"/>
<dbReference type="Proteomes" id="UP000186698">
    <property type="component" value="Chromosome 8S"/>
</dbReference>
<dbReference type="Bgee" id="447495">
    <property type="expression patterns" value="Expressed in oocyte and 19 other cell types or tissues"/>
</dbReference>
<dbReference type="GO" id="GO:0005789">
    <property type="term" value="C:endoplasmic reticulum membrane"/>
    <property type="evidence" value="ECO:0007669"/>
    <property type="project" value="UniProtKB-SubCell"/>
</dbReference>
<dbReference type="GO" id="GO:0017059">
    <property type="term" value="C:serine palmitoyltransferase complex"/>
    <property type="evidence" value="ECO:0000250"/>
    <property type="project" value="UniProtKB"/>
</dbReference>
<dbReference type="GO" id="GO:0004758">
    <property type="term" value="F:serine C-palmitoyltransferase activity"/>
    <property type="evidence" value="ECO:0007669"/>
    <property type="project" value="TreeGrafter"/>
</dbReference>
<dbReference type="GO" id="GO:0046513">
    <property type="term" value="P:ceramide biosynthetic process"/>
    <property type="evidence" value="ECO:0000318"/>
    <property type="project" value="GO_Central"/>
</dbReference>
<dbReference type="InterPro" id="IPR024512">
    <property type="entry name" value="Ser_palmitoyltrfase_ssu-like"/>
</dbReference>
<dbReference type="InterPro" id="IPR051900">
    <property type="entry name" value="SPT_small_subunit"/>
</dbReference>
<dbReference type="PANTHER" id="PTHR47084">
    <property type="entry name" value="SERINE PALMITOYLTRANSFERASE SMALL SUBUNIT A"/>
    <property type="match status" value="1"/>
</dbReference>
<dbReference type="PANTHER" id="PTHR47084:SF1">
    <property type="entry name" value="SERINE PALMITOYLTRANSFERASE SMALL SUBUNIT A"/>
    <property type="match status" value="1"/>
</dbReference>
<dbReference type="Pfam" id="PF11779">
    <property type="entry name" value="SPT_ssu-like"/>
    <property type="match status" value="1"/>
</dbReference>
<gene>
    <name type="primary">sptssa-a</name>
    <name type="synonym">ssspta-a</name>
</gene>
<comment type="function">
    <text evidence="1">Component of the serine palmitoyltransferase multisubunit enzyme (SPT) that catalyzes the initial and rate-limiting step in sphingolipid biosynthesis by condensing L-serine and activated acyl-CoA (most commonly palmitoyl-CoA) to form long-chain bases. The SPT complex is composed of SPTLC1, SPTLC2 or SPTLC3 and SPTSSA or SPTSSB. Within this complex, the heterodimer consisting of SPTLC1 and SPTLC2/SPTLC3 forms the catalytic core. Within the SPT complex, SPTSSA stimulates the catalytic activity and plays a role in substrate specificity, which depends upon the overall complex composition. The SPTLC1-SPTLC2-SPTSSA complex shows a strong preference for C16-CoA substrate, while the SPTLC1-SPTLC3-SPTSSA isozyme uses both C14-CoA and C16-CoA as substrates, with a slight preference for C14-CoA. Independently of its action as a SPT component, may be involved in MBOAT7 localization to mitochondria-associated membranes, a membrane bridge between the endoplasmic reticulum and mitochondria, may hence affect MBOAT7-catalyzed incorporation of arachidonic acid into phosphatidylinositol.</text>
</comment>
<comment type="pathway">
    <text>Lipid metabolism; sphingolipid metabolism.</text>
</comment>
<comment type="subunit">
    <text evidence="1">Component of the serine palmitoyltransferase (SPT) complex, which is composed of SPTLC1, SPTLC2 or SPTLC3 and SPTSSA or SPTSSB. The heterodimer consisting of SPTLC1 and SPTLC2/SPTLC3 forms the catalytic core of the enzyme, while SPTSSA or SPTSSB subunits determine substrate specificity. SPT also interacts with ORMDL proteins, especially ORMDL3, which negatively regulate SPT activity in the presence of ceramides.</text>
</comment>
<comment type="subcellular location">
    <subcellularLocation>
        <location evidence="3">Endoplasmic reticulum membrane</location>
        <topology evidence="3">Multi-pass membrane protein</topology>
    </subcellularLocation>
</comment>
<comment type="similarity">
    <text evidence="3">Belongs to the SPTSS family. SPTSSA subfamily.</text>
</comment>
<feature type="chain" id="PRO_0000293706" description="Serine palmitoyltransferase small subunit A-A">
    <location>
        <begin position="1"/>
        <end position="80"/>
    </location>
</feature>
<feature type="topological domain" description="Cytoplasmic" evidence="2">
    <location>
        <begin position="1"/>
        <end position="21"/>
    </location>
</feature>
<feature type="transmembrane region" description="Helical" evidence="2">
    <location>
        <begin position="22"/>
        <end position="38"/>
    </location>
</feature>
<feature type="topological domain" description="Lumenal" evidence="2">
    <location>
        <begin position="39"/>
        <end position="43"/>
    </location>
</feature>
<feature type="transmembrane region" description="Helical" evidence="2">
    <location>
        <begin position="44"/>
        <end position="66"/>
    </location>
</feature>
<feature type="topological domain" description="Cytoplasmic" evidence="2">
    <location>
        <begin position="67"/>
        <end position="80"/>
    </location>
</feature>
<feature type="site" description="Within the serine palmitoyltransferase (SPT) complex, defines the length of the acyl chain-binding pocket, determining the acyl-CoA substrate preference" evidence="1">
    <location>
        <position position="37"/>
    </location>
</feature>
<proteinExistence type="inferred from homology"/>
<organism>
    <name type="scientific">Xenopus laevis</name>
    <name type="common">African clawed frog</name>
    <dbReference type="NCBI Taxonomy" id="8355"/>
    <lineage>
        <taxon>Eukaryota</taxon>
        <taxon>Metazoa</taxon>
        <taxon>Chordata</taxon>
        <taxon>Craniata</taxon>
        <taxon>Vertebrata</taxon>
        <taxon>Euteleostomi</taxon>
        <taxon>Amphibia</taxon>
        <taxon>Batrachia</taxon>
        <taxon>Anura</taxon>
        <taxon>Pipoidea</taxon>
        <taxon>Pipidae</taxon>
        <taxon>Xenopodinae</taxon>
        <taxon>Xenopus</taxon>
        <taxon>Xenopus</taxon>
    </lineage>
</organism>
<name>SPSAA_XENLA</name>
<sequence>MKVLCEDVNGPRSSLGRAWSHMSWLYYQYLLVTALYMLEPWERTVFNSMLVSIVGMALYTGYIFMPQHILAILHYFEIVQ</sequence>
<reference key="1">
    <citation type="submission" date="2004-08" db="EMBL/GenBank/DDBJ databases">
        <authorList>
            <consortium name="NIH - Xenopus Gene Collection (XGC) project"/>
        </authorList>
    </citation>
    <scope>NUCLEOTIDE SEQUENCE [LARGE SCALE MRNA]</scope>
    <source>
        <tissue>Kidney</tissue>
    </source>
</reference>
<keyword id="KW-0256">Endoplasmic reticulum</keyword>
<keyword id="KW-0443">Lipid metabolism</keyword>
<keyword id="KW-0472">Membrane</keyword>
<keyword id="KW-1185">Reference proteome</keyword>
<keyword id="KW-0746">Sphingolipid metabolism</keyword>
<keyword id="KW-0812">Transmembrane</keyword>
<keyword id="KW-1133">Transmembrane helix</keyword>
<evidence type="ECO:0000250" key="1">
    <source>
        <dbReference type="UniProtKB" id="Q969W0"/>
    </source>
</evidence>
<evidence type="ECO:0000255" key="2"/>
<evidence type="ECO:0000305" key="3"/>
<protein>
    <recommendedName>
        <fullName>Serine palmitoyltransferase small subunit A-A</fullName>
    </recommendedName>
    <alternativeName>
        <fullName>Small subunit of serine palmitoyltransferase A-A</fullName>
        <shortName>ssSPTa-A</shortName>
    </alternativeName>
</protein>
<accession>Q66J44</accession>